<protein>
    <recommendedName>
        <fullName evidence="1">dTTP/UTP pyrophosphatase</fullName>
        <shortName evidence="1">dTTPase/UTPase</shortName>
        <ecNumber evidence="1">3.6.1.9</ecNumber>
    </recommendedName>
    <alternativeName>
        <fullName evidence="1">Nucleoside triphosphate pyrophosphatase</fullName>
    </alternativeName>
    <alternativeName>
        <fullName evidence="1">Nucleotide pyrophosphatase</fullName>
        <shortName evidence="1">Nucleotide PPase</shortName>
    </alternativeName>
</protein>
<organism>
    <name type="scientific">Thermus thermophilus (strain ATCC BAA-163 / DSM 7039 / HB27)</name>
    <dbReference type="NCBI Taxonomy" id="262724"/>
    <lineage>
        <taxon>Bacteria</taxon>
        <taxon>Thermotogati</taxon>
        <taxon>Deinococcota</taxon>
        <taxon>Deinococci</taxon>
        <taxon>Thermales</taxon>
        <taxon>Thermaceae</taxon>
        <taxon>Thermus</taxon>
    </lineage>
</organism>
<accession>Q72JE7</accession>
<feature type="chain" id="PRO_0000267453" description="dTTP/UTP pyrophosphatase">
    <location>
        <begin position="1"/>
        <end position="187"/>
    </location>
</feature>
<feature type="active site" description="Proton acceptor" evidence="1">
    <location>
        <position position="68"/>
    </location>
</feature>
<feature type="site" description="Important for substrate specificity" evidence="1">
    <location>
        <position position="16"/>
    </location>
</feature>
<feature type="site" description="Important for substrate specificity" evidence="1">
    <location>
        <position position="69"/>
    </location>
</feature>
<feature type="site" description="Important for substrate specificity" evidence="1">
    <location>
        <position position="151"/>
    </location>
</feature>
<keyword id="KW-0963">Cytoplasm</keyword>
<keyword id="KW-0378">Hydrolase</keyword>
<keyword id="KW-0546">Nucleotide metabolism</keyword>
<reference key="1">
    <citation type="journal article" date="2004" name="Nat. Biotechnol.">
        <title>The genome sequence of the extreme thermophile Thermus thermophilus.</title>
        <authorList>
            <person name="Henne A."/>
            <person name="Brueggemann H."/>
            <person name="Raasch C."/>
            <person name="Wiezer A."/>
            <person name="Hartsch T."/>
            <person name="Liesegang H."/>
            <person name="Johann A."/>
            <person name="Lienard T."/>
            <person name="Gohl O."/>
            <person name="Martinez-Arias R."/>
            <person name="Jacobi C."/>
            <person name="Starkuviene V."/>
            <person name="Schlenczeck S."/>
            <person name="Dencker S."/>
            <person name="Huber R."/>
            <person name="Klenk H.-P."/>
            <person name="Kramer W."/>
            <person name="Merkl R."/>
            <person name="Gottschalk G."/>
            <person name="Fritz H.-J."/>
        </authorList>
    </citation>
    <scope>NUCLEOTIDE SEQUENCE [LARGE SCALE GENOMIC DNA]</scope>
    <source>
        <strain>ATCC BAA-163 / DSM 7039 / HB27</strain>
    </source>
</reference>
<proteinExistence type="inferred from homology"/>
<gene>
    <name type="ordered locus">TT_C0825</name>
</gene>
<sequence>MGSGKPPLILASGSPRRKALLEALGYPIRVAVPGVEEEGLPLPPKALAQALARRKGEAVQGEWVLAADTVVDLDGEVLGKPKDPEENRLFLRRLSGRPHLVHTAFYLRTPKEVVEEVHTAKVFFRPLSEEEIAWYVGSGEGLDKAGGYGAQGLGMALLERVEGDFYTVVGLPVSRVFALLWARGFRP</sequence>
<name>NTPPA_THET2</name>
<evidence type="ECO:0000255" key="1">
    <source>
        <dbReference type="HAMAP-Rule" id="MF_00528"/>
    </source>
</evidence>
<dbReference type="EC" id="3.6.1.9" evidence="1"/>
<dbReference type="EMBL" id="AE017221">
    <property type="protein sequence ID" value="AAS81171.1"/>
    <property type="molecule type" value="Genomic_DNA"/>
</dbReference>
<dbReference type="RefSeq" id="WP_011173256.1">
    <property type="nucleotide sequence ID" value="NC_005835.1"/>
</dbReference>
<dbReference type="SMR" id="Q72JE7"/>
<dbReference type="KEGG" id="tth:TT_C0825"/>
<dbReference type="eggNOG" id="COG0424">
    <property type="taxonomic scope" value="Bacteria"/>
</dbReference>
<dbReference type="HOGENOM" id="CLU_040416_2_1_0"/>
<dbReference type="OrthoDB" id="9807767at2"/>
<dbReference type="Proteomes" id="UP000000592">
    <property type="component" value="Chromosome"/>
</dbReference>
<dbReference type="GO" id="GO:0005737">
    <property type="term" value="C:cytoplasm"/>
    <property type="evidence" value="ECO:0007669"/>
    <property type="project" value="UniProtKB-SubCell"/>
</dbReference>
<dbReference type="GO" id="GO:0036218">
    <property type="term" value="F:dTTP diphosphatase activity"/>
    <property type="evidence" value="ECO:0007669"/>
    <property type="project" value="RHEA"/>
</dbReference>
<dbReference type="GO" id="GO:0036221">
    <property type="term" value="F:UTP diphosphatase activity"/>
    <property type="evidence" value="ECO:0007669"/>
    <property type="project" value="RHEA"/>
</dbReference>
<dbReference type="GO" id="GO:0009117">
    <property type="term" value="P:nucleotide metabolic process"/>
    <property type="evidence" value="ECO:0007669"/>
    <property type="project" value="UniProtKB-KW"/>
</dbReference>
<dbReference type="CDD" id="cd00555">
    <property type="entry name" value="Maf"/>
    <property type="match status" value="1"/>
</dbReference>
<dbReference type="Gene3D" id="3.90.950.10">
    <property type="match status" value="1"/>
</dbReference>
<dbReference type="HAMAP" id="MF_00528">
    <property type="entry name" value="Maf"/>
    <property type="match status" value="1"/>
</dbReference>
<dbReference type="InterPro" id="IPR029001">
    <property type="entry name" value="ITPase-like_fam"/>
</dbReference>
<dbReference type="InterPro" id="IPR003697">
    <property type="entry name" value="Maf-like"/>
</dbReference>
<dbReference type="NCBIfam" id="TIGR00172">
    <property type="entry name" value="maf"/>
    <property type="match status" value="1"/>
</dbReference>
<dbReference type="PANTHER" id="PTHR43213">
    <property type="entry name" value="BIFUNCTIONAL DTTP/UTP PYROPHOSPHATASE/METHYLTRANSFERASE PROTEIN-RELATED"/>
    <property type="match status" value="1"/>
</dbReference>
<dbReference type="PANTHER" id="PTHR43213:SF5">
    <property type="entry name" value="BIFUNCTIONAL DTTP_UTP PYROPHOSPHATASE_METHYLTRANSFERASE PROTEIN-RELATED"/>
    <property type="match status" value="1"/>
</dbReference>
<dbReference type="Pfam" id="PF02545">
    <property type="entry name" value="Maf"/>
    <property type="match status" value="1"/>
</dbReference>
<dbReference type="PIRSF" id="PIRSF006305">
    <property type="entry name" value="Maf"/>
    <property type="match status" value="1"/>
</dbReference>
<dbReference type="SUPFAM" id="SSF52972">
    <property type="entry name" value="ITPase-like"/>
    <property type="match status" value="1"/>
</dbReference>
<comment type="function">
    <text evidence="1">Nucleoside triphosphate pyrophosphatase that hydrolyzes dTTP and UTP. May have a dual role in cell division arrest and in preventing the incorporation of modified nucleotides into cellular nucleic acids.</text>
</comment>
<comment type="catalytic activity">
    <reaction evidence="1">
        <text>dTTP + H2O = dTMP + diphosphate + H(+)</text>
        <dbReference type="Rhea" id="RHEA:28534"/>
        <dbReference type="ChEBI" id="CHEBI:15377"/>
        <dbReference type="ChEBI" id="CHEBI:15378"/>
        <dbReference type="ChEBI" id="CHEBI:33019"/>
        <dbReference type="ChEBI" id="CHEBI:37568"/>
        <dbReference type="ChEBI" id="CHEBI:63528"/>
        <dbReference type="EC" id="3.6.1.9"/>
    </reaction>
</comment>
<comment type="catalytic activity">
    <reaction evidence="1">
        <text>UTP + H2O = UMP + diphosphate + H(+)</text>
        <dbReference type="Rhea" id="RHEA:29395"/>
        <dbReference type="ChEBI" id="CHEBI:15377"/>
        <dbReference type="ChEBI" id="CHEBI:15378"/>
        <dbReference type="ChEBI" id="CHEBI:33019"/>
        <dbReference type="ChEBI" id="CHEBI:46398"/>
        <dbReference type="ChEBI" id="CHEBI:57865"/>
        <dbReference type="EC" id="3.6.1.9"/>
    </reaction>
</comment>
<comment type="cofactor">
    <cofactor evidence="1">
        <name>a divalent metal cation</name>
        <dbReference type="ChEBI" id="CHEBI:60240"/>
    </cofactor>
</comment>
<comment type="subcellular location">
    <subcellularLocation>
        <location evidence="1">Cytoplasm</location>
    </subcellularLocation>
</comment>
<comment type="similarity">
    <text evidence="1">Belongs to the Maf family. YhdE subfamily.</text>
</comment>